<dbReference type="EC" id="3.4.24.-"/>
<dbReference type="EMBL" id="GQ451439">
    <property type="protein sequence ID" value="ACV83933.1"/>
    <property type="molecule type" value="mRNA"/>
</dbReference>
<dbReference type="SMR" id="C9E1R8"/>
<dbReference type="MEROPS" id="M12.332"/>
<dbReference type="GO" id="GO:0005576">
    <property type="term" value="C:extracellular region"/>
    <property type="evidence" value="ECO:0007669"/>
    <property type="project" value="UniProtKB-SubCell"/>
</dbReference>
<dbReference type="GO" id="GO:0005886">
    <property type="term" value="C:plasma membrane"/>
    <property type="evidence" value="ECO:0007669"/>
    <property type="project" value="TreeGrafter"/>
</dbReference>
<dbReference type="GO" id="GO:0046872">
    <property type="term" value="F:metal ion binding"/>
    <property type="evidence" value="ECO:0007669"/>
    <property type="project" value="UniProtKB-KW"/>
</dbReference>
<dbReference type="GO" id="GO:0004222">
    <property type="term" value="F:metalloendopeptidase activity"/>
    <property type="evidence" value="ECO:0007669"/>
    <property type="project" value="InterPro"/>
</dbReference>
<dbReference type="GO" id="GO:0090729">
    <property type="term" value="F:toxin activity"/>
    <property type="evidence" value="ECO:0007669"/>
    <property type="project" value="UniProtKB-KW"/>
</dbReference>
<dbReference type="GO" id="GO:0006508">
    <property type="term" value="P:proteolysis"/>
    <property type="evidence" value="ECO:0007669"/>
    <property type="project" value="UniProtKB-KW"/>
</dbReference>
<dbReference type="CDD" id="cd04269">
    <property type="entry name" value="ZnMc_adamalysin_II_like"/>
    <property type="match status" value="1"/>
</dbReference>
<dbReference type="FunFam" id="3.40.390.10:FF:000002">
    <property type="entry name" value="Disintegrin and metalloproteinase domain-containing protein 22"/>
    <property type="match status" value="1"/>
</dbReference>
<dbReference type="FunFam" id="4.10.70.10:FF:000001">
    <property type="entry name" value="Disintegrin and metalloproteinase domain-containing protein 22"/>
    <property type="match status" value="1"/>
</dbReference>
<dbReference type="Gene3D" id="3.40.390.10">
    <property type="entry name" value="Collagenase (Catalytic Domain)"/>
    <property type="match status" value="1"/>
</dbReference>
<dbReference type="Gene3D" id="4.10.70.10">
    <property type="entry name" value="Disintegrin domain"/>
    <property type="match status" value="1"/>
</dbReference>
<dbReference type="InterPro" id="IPR006586">
    <property type="entry name" value="ADAM_Cys-rich"/>
</dbReference>
<dbReference type="InterPro" id="IPR018358">
    <property type="entry name" value="Disintegrin_CS"/>
</dbReference>
<dbReference type="InterPro" id="IPR001762">
    <property type="entry name" value="Disintegrin_dom"/>
</dbReference>
<dbReference type="InterPro" id="IPR036436">
    <property type="entry name" value="Disintegrin_dom_sf"/>
</dbReference>
<dbReference type="InterPro" id="IPR024079">
    <property type="entry name" value="MetalloPept_cat_dom_sf"/>
</dbReference>
<dbReference type="InterPro" id="IPR001590">
    <property type="entry name" value="Peptidase_M12B"/>
</dbReference>
<dbReference type="InterPro" id="IPR002870">
    <property type="entry name" value="Peptidase_M12B_N"/>
</dbReference>
<dbReference type="InterPro" id="IPR034027">
    <property type="entry name" value="Reprolysin_adamalysin"/>
</dbReference>
<dbReference type="PANTHER" id="PTHR11905">
    <property type="entry name" value="ADAM A DISINTEGRIN AND METALLOPROTEASE DOMAIN"/>
    <property type="match status" value="1"/>
</dbReference>
<dbReference type="PANTHER" id="PTHR11905:SF32">
    <property type="entry name" value="DISINTEGRIN AND METALLOPROTEINASE DOMAIN-CONTAINING PROTEIN 28"/>
    <property type="match status" value="1"/>
</dbReference>
<dbReference type="Pfam" id="PF08516">
    <property type="entry name" value="ADAM_CR"/>
    <property type="match status" value="1"/>
</dbReference>
<dbReference type="Pfam" id="PF00200">
    <property type="entry name" value="Disintegrin"/>
    <property type="match status" value="1"/>
</dbReference>
<dbReference type="Pfam" id="PF01562">
    <property type="entry name" value="Pep_M12B_propep"/>
    <property type="match status" value="1"/>
</dbReference>
<dbReference type="Pfam" id="PF01421">
    <property type="entry name" value="Reprolysin"/>
    <property type="match status" value="1"/>
</dbReference>
<dbReference type="PRINTS" id="PR00289">
    <property type="entry name" value="DISINTEGRIN"/>
</dbReference>
<dbReference type="SMART" id="SM00608">
    <property type="entry name" value="ACR"/>
    <property type="match status" value="1"/>
</dbReference>
<dbReference type="SMART" id="SM00050">
    <property type="entry name" value="DISIN"/>
    <property type="match status" value="1"/>
</dbReference>
<dbReference type="SUPFAM" id="SSF57552">
    <property type="entry name" value="Blood coagulation inhibitor (disintegrin)"/>
    <property type="match status" value="1"/>
</dbReference>
<dbReference type="SUPFAM" id="SSF55486">
    <property type="entry name" value="Metalloproteases ('zincins'), catalytic domain"/>
    <property type="match status" value="1"/>
</dbReference>
<dbReference type="PROSITE" id="PS50215">
    <property type="entry name" value="ADAM_MEPRO"/>
    <property type="match status" value="1"/>
</dbReference>
<dbReference type="PROSITE" id="PS00427">
    <property type="entry name" value="DISINTEGRIN_1"/>
    <property type="match status" value="1"/>
</dbReference>
<dbReference type="PROSITE" id="PS50214">
    <property type="entry name" value="DISINTEGRIN_2"/>
    <property type="match status" value="1"/>
</dbReference>
<dbReference type="PROSITE" id="PS00142">
    <property type="entry name" value="ZINC_PROTEASE"/>
    <property type="match status" value="1"/>
</dbReference>
<organism>
    <name type="scientific">Crotalus viridis viridis</name>
    <name type="common">Prairie rattlesnake</name>
    <dbReference type="NCBI Taxonomy" id="8742"/>
    <lineage>
        <taxon>Eukaryota</taxon>
        <taxon>Metazoa</taxon>
        <taxon>Chordata</taxon>
        <taxon>Craniata</taxon>
        <taxon>Vertebrata</taxon>
        <taxon>Euteleostomi</taxon>
        <taxon>Lepidosauria</taxon>
        <taxon>Squamata</taxon>
        <taxon>Bifurcata</taxon>
        <taxon>Unidentata</taxon>
        <taxon>Episquamata</taxon>
        <taxon>Toxicofera</taxon>
        <taxon>Serpentes</taxon>
        <taxon>Colubroidea</taxon>
        <taxon>Viperidae</taxon>
        <taxon>Crotalinae</taxon>
        <taxon>Crotalus</taxon>
    </lineage>
</organism>
<feature type="signal peptide" evidence="2">
    <location>
        <begin position="1"/>
        <end position="20"/>
    </location>
</feature>
<feature type="propeptide" id="PRO_0000407414" evidence="1">
    <location>
        <begin position="21"/>
        <end position="189"/>
    </location>
</feature>
<feature type="chain" id="PRO_0000407415" description="Zinc metalloproteinase-disintegrin-like VMP-III">
    <location>
        <begin position="190"/>
        <end position="609"/>
    </location>
</feature>
<feature type="domain" description="Peptidase M12B" evidence="4">
    <location>
        <begin position="198"/>
        <end position="393"/>
    </location>
</feature>
<feature type="domain" description="Disintegrin" evidence="3">
    <location>
        <begin position="401"/>
        <end position="487"/>
    </location>
</feature>
<feature type="short sequence motif" description="D/ECD-tripeptide">
    <location>
        <begin position="465"/>
        <end position="467"/>
    </location>
</feature>
<feature type="active site" evidence="4 5">
    <location>
        <position position="334"/>
    </location>
</feature>
<feature type="binding site" evidence="1">
    <location>
        <position position="201"/>
    </location>
    <ligand>
        <name>Ca(2+)</name>
        <dbReference type="ChEBI" id="CHEBI:29108"/>
        <label>1</label>
    </ligand>
</feature>
<feature type="binding site" evidence="1">
    <location>
        <position position="285"/>
    </location>
    <ligand>
        <name>Ca(2+)</name>
        <dbReference type="ChEBI" id="CHEBI:29108"/>
        <label>1</label>
    </ligand>
</feature>
<feature type="binding site" evidence="1">
    <location>
        <position position="333"/>
    </location>
    <ligand>
        <name>Zn(2+)</name>
        <dbReference type="ChEBI" id="CHEBI:29105"/>
        <note>catalytic</note>
    </ligand>
</feature>
<feature type="binding site" evidence="1">
    <location>
        <position position="337"/>
    </location>
    <ligand>
        <name>Zn(2+)</name>
        <dbReference type="ChEBI" id="CHEBI:29105"/>
        <note>catalytic</note>
    </ligand>
</feature>
<feature type="binding site" evidence="1">
    <location>
        <position position="343"/>
    </location>
    <ligand>
        <name>Zn(2+)</name>
        <dbReference type="ChEBI" id="CHEBI:29105"/>
        <note>catalytic</note>
    </ligand>
</feature>
<feature type="binding site" evidence="1">
    <location>
        <position position="388"/>
    </location>
    <ligand>
        <name>Ca(2+)</name>
        <dbReference type="ChEBI" id="CHEBI:29108"/>
        <label>1</label>
    </ligand>
</feature>
<feature type="binding site" evidence="1">
    <location>
        <position position="391"/>
    </location>
    <ligand>
        <name>Ca(2+)</name>
        <dbReference type="ChEBI" id="CHEBI:29108"/>
        <label>1</label>
    </ligand>
</feature>
<feature type="binding site" evidence="1">
    <location>
        <position position="403"/>
    </location>
    <ligand>
        <name>Ca(2+)</name>
        <dbReference type="ChEBI" id="CHEBI:29108"/>
        <label>2</label>
    </ligand>
</feature>
<feature type="binding site" evidence="1">
    <location>
        <position position="406"/>
    </location>
    <ligand>
        <name>Ca(2+)</name>
        <dbReference type="ChEBI" id="CHEBI:29108"/>
        <label>2</label>
    </ligand>
</feature>
<feature type="binding site" evidence="1">
    <location>
        <position position="408"/>
    </location>
    <ligand>
        <name>Ca(2+)</name>
        <dbReference type="ChEBI" id="CHEBI:29108"/>
        <label>2</label>
    </ligand>
</feature>
<feature type="binding site" evidence="1">
    <location>
        <position position="410"/>
    </location>
    <ligand>
        <name>Ca(2+)</name>
        <dbReference type="ChEBI" id="CHEBI:29108"/>
        <label>2</label>
    </ligand>
</feature>
<feature type="binding site" evidence="1">
    <location>
        <position position="413"/>
    </location>
    <ligand>
        <name>Ca(2+)</name>
        <dbReference type="ChEBI" id="CHEBI:29108"/>
        <label>2</label>
    </ligand>
</feature>
<feature type="binding site" evidence="1">
    <location>
        <position position="416"/>
    </location>
    <ligand>
        <name>Ca(2+)</name>
        <dbReference type="ChEBI" id="CHEBI:29108"/>
        <label>2</label>
    </ligand>
</feature>
<feature type="binding site" evidence="1">
    <location>
        <position position="467"/>
    </location>
    <ligand>
        <name>Ca(2+)</name>
        <dbReference type="ChEBI" id="CHEBI:29108"/>
        <label>3</label>
    </ligand>
</feature>
<feature type="binding site" evidence="1">
    <location>
        <position position="468"/>
    </location>
    <ligand>
        <name>Ca(2+)</name>
        <dbReference type="ChEBI" id="CHEBI:29108"/>
        <label>3</label>
    </ligand>
</feature>
<feature type="binding site" evidence="1">
    <location>
        <position position="470"/>
    </location>
    <ligand>
        <name>Ca(2+)</name>
        <dbReference type="ChEBI" id="CHEBI:29108"/>
        <label>3</label>
    </ligand>
</feature>
<feature type="binding site" evidence="1">
    <location>
        <position position="482"/>
    </location>
    <ligand>
        <name>Ca(2+)</name>
        <dbReference type="ChEBI" id="CHEBI:29108"/>
        <label>3</label>
    </ligand>
</feature>
<feature type="binding site" evidence="1">
    <location>
        <position position="483"/>
    </location>
    <ligand>
        <name>Ca(2+)</name>
        <dbReference type="ChEBI" id="CHEBI:29108"/>
        <label>3</label>
    </ligand>
</feature>
<feature type="glycosylation site" description="N-linked (GlcNAc...) asparagine" evidence="2">
    <location>
        <position position="371"/>
    </location>
</feature>
<feature type="disulfide bond" evidence="1">
    <location>
        <begin position="308"/>
        <end position="388"/>
    </location>
</feature>
<feature type="disulfide bond" evidence="1">
    <location>
        <begin position="348"/>
        <end position="372"/>
    </location>
</feature>
<feature type="disulfide bond" evidence="1">
    <location>
        <begin position="350"/>
        <end position="355"/>
    </location>
</feature>
<feature type="disulfide bond" evidence="1">
    <location>
        <begin position="404"/>
        <end position="433"/>
    </location>
</feature>
<feature type="disulfide bond" evidence="1">
    <location>
        <begin position="415"/>
        <end position="428"/>
    </location>
</feature>
<feature type="disulfide bond" evidence="1">
    <location>
        <begin position="417"/>
        <end position="423"/>
    </location>
</feature>
<feature type="disulfide bond" evidence="1">
    <location>
        <begin position="427"/>
        <end position="450"/>
    </location>
</feature>
<feature type="disulfide bond" evidence="1">
    <location>
        <begin position="441"/>
        <end position="447"/>
    </location>
</feature>
<feature type="disulfide bond" evidence="1">
    <location>
        <begin position="446"/>
        <end position="472"/>
    </location>
</feature>
<feature type="disulfide bond" evidence="1">
    <location>
        <begin position="459"/>
        <end position="479"/>
    </location>
</feature>
<feature type="disulfide bond" evidence="1">
    <location>
        <begin position="466"/>
        <end position="498"/>
    </location>
</feature>
<feature type="disulfide bond" evidence="1">
    <location>
        <begin position="491"/>
        <end position="503"/>
    </location>
</feature>
<feature type="disulfide bond" evidence="1">
    <location>
        <begin position="510"/>
        <end position="560"/>
    </location>
</feature>
<feature type="disulfide bond" evidence="1">
    <location>
        <begin position="525"/>
        <end position="571"/>
    </location>
</feature>
<feature type="disulfide bond" evidence="1">
    <location>
        <begin position="538"/>
        <end position="548"/>
    </location>
</feature>
<feature type="disulfide bond" evidence="1">
    <location>
        <begin position="555"/>
        <end position="597"/>
    </location>
</feature>
<feature type="disulfide bond" evidence="1">
    <location>
        <begin position="591"/>
        <end position="602"/>
    </location>
</feature>
<accession>C9E1R8</accession>
<proteinExistence type="evidence at transcript level"/>
<sequence length="609" mass="68364">MIQVLLVTICLAAFPYQGSSIILESGNVNDYEIVYPRKVTALPKGAVQPKYEDAMQYELKVSGEPVVLHLEKNKQLFSKDYSETHYSPDGREITTYPLVEDHCYYHGRIENDADSTASISACNGLKGHFKLQGEMYLIEPLKLPDSEAHAVYKYENVEKEDEALKMCGVTQNWESYEPIKKASQLVVTAEHQKYNPFRFVELFLVVDKAMVTKNNGDLDKIKTRMYEIVNTVNEIYRYMYIHVALVGLEIWSNEDKITVKPEAGYTLNAFGEWRKTDLLTRKKHDNAQLLTAIDLDRVIGLAYVGSMCHPKRSTGIIQDYSEINLVVAVIMAHEMGHNLGINHDSGYCSCGDYACIMRPEISPEPSTFFSNCSYFECWDFIMNHNPECILNEPLGTDIISPPVCGNELLEVGEECDCGTPENCQNECCDAATCKLKSGSQCGHGDCCEQCKFSKSGTECRASMSECDPAEHCTGQSSECPADVFHKNGQPCLDNYGYCYNGNCPIMYHQCYDLFGADVYEAEDSCFERNQKGNYYGYCRKENGNKIPCAPEDVKCGRLYCKDNSPGQNNPCKMFYSNEDEHKGMVLPGTKCADGKVCSNGHCVDVATAY</sequence>
<protein>
    <recommendedName>
        <fullName>Zinc metalloproteinase-disintegrin-like VMP-III</fullName>
        <shortName>CvvVMP-III</shortName>
        <ecNumber>3.4.24.-</ecNumber>
    </recommendedName>
    <alternativeName>
        <fullName>Snake venom metalloproteinase</fullName>
        <shortName>SVMP</shortName>
    </alternativeName>
</protein>
<keyword id="KW-0106">Calcium</keyword>
<keyword id="KW-1217">Cell adhesion impairing toxin</keyword>
<keyword id="KW-1015">Disulfide bond</keyword>
<keyword id="KW-0325">Glycoprotein</keyword>
<keyword id="KW-1199">Hemostasis impairing toxin</keyword>
<keyword id="KW-0378">Hydrolase</keyword>
<keyword id="KW-0479">Metal-binding</keyword>
<keyword id="KW-0482">Metalloprotease</keyword>
<keyword id="KW-0645">Protease</keyword>
<keyword id="KW-0964">Secreted</keyword>
<keyword id="KW-0732">Signal</keyword>
<keyword id="KW-0800">Toxin</keyword>
<keyword id="KW-0862">Zinc</keyword>
<keyword id="KW-0865">Zymogen</keyword>
<name>VM3V3_CROVV</name>
<reference key="1">
    <citation type="journal article" date="2010" name="Toxicon">
        <title>Molecular cloning and characterization of cDNAs encoding metalloproteinases from snake venom glands.</title>
        <authorList>
            <person name="Jia Y."/>
            <person name="Perez J.C."/>
        </authorList>
    </citation>
    <scope>NUCLEOTIDE SEQUENCE [MRNA]</scope>
    <source>
        <tissue>Venom gland</tissue>
    </source>
</reference>
<comment type="function">
    <text evidence="1">Snake venom metalloproteinase that impairs hemostasis in the envenomed animal.</text>
</comment>
<comment type="cofactor">
    <cofactor evidence="1">
        <name>Zn(2+)</name>
        <dbReference type="ChEBI" id="CHEBI:29105"/>
    </cofactor>
    <text evidence="1">Binds 1 zinc ion per subunit.</text>
</comment>
<comment type="subunit">
    <text evidence="1">Monomer.</text>
</comment>
<comment type="subcellular location">
    <subcellularLocation>
        <location evidence="1">Secreted</location>
    </subcellularLocation>
</comment>
<comment type="tissue specificity">
    <text>Expressed by the venom gland.</text>
</comment>
<comment type="similarity">
    <text evidence="6">Belongs to the venom metalloproteinase (M12B) family. P-III subfamily. P-IIIa sub-subfamily.</text>
</comment>
<evidence type="ECO:0000250" key="1"/>
<evidence type="ECO:0000255" key="2"/>
<evidence type="ECO:0000255" key="3">
    <source>
        <dbReference type="PROSITE-ProRule" id="PRU00068"/>
    </source>
</evidence>
<evidence type="ECO:0000255" key="4">
    <source>
        <dbReference type="PROSITE-ProRule" id="PRU00276"/>
    </source>
</evidence>
<evidence type="ECO:0000255" key="5">
    <source>
        <dbReference type="PROSITE-ProRule" id="PRU10095"/>
    </source>
</evidence>
<evidence type="ECO:0000305" key="6"/>